<organism>
    <name type="scientific">Burkholderia mallei (strain SAVP1)</name>
    <dbReference type="NCBI Taxonomy" id="320388"/>
    <lineage>
        <taxon>Bacteria</taxon>
        <taxon>Pseudomonadati</taxon>
        <taxon>Pseudomonadota</taxon>
        <taxon>Betaproteobacteria</taxon>
        <taxon>Burkholderiales</taxon>
        <taxon>Burkholderiaceae</taxon>
        <taxon>Burkholderia</taxon>
        <taxon>pseudomallei group</taxon>
    </lineage>
</organism>
<keyword id="KW-0963">Cytoplasm</keyword>
<keyword id="KW-0444">Lipid biosynthesis</keyword>
<keyword id="KW-0443">Lipid metabolism</keyword>
<keyword id="KW-0520">NAD</keyword>
<keyword id="KW-0521">NADP</keyword>
<keyword id="KW-0547">Nucleotide-binding</keyword>
<keyword id="KW-0560">Oxidoreductase</keyword>
<keyword id="KW-0594">Phospholipid biosynthesis</keyword>
<keyword id="KW-1208">Phospholipid metabolism</keyword>
<feature type="chain" id="PRO_1000049490" description="Glycerol-3-phosphate dehydrogenase [NAD(P)+]">
    <location>
        <begin position="1"/>
        <end position="335"/>
    </location>
</feature>
<feature type="active site" description="Proton acceptor" evidence="1">
    <location>
        <position position="195"/>
    </location>
</feature>
<feature type="binding site" evidence="1">
    <location>
        <position position="14"/>
    </location>
    <ligand>
        <name>NADPH</name>
        <dbReference type="ChEBI" id="CHEBI:57783"/>
    </ligand>
</feature>
<feature type="binding site" evidence="1">
    <location>
        <position position="33"/>
    </location>
    <ligand>
        <name>NADPH</name>
        <dbReference type="ChEBI" id="CHEBI:57783"/>
    </ligand>
</feature>
<feature type="binding site" evidence="1">
    <location>
        <position position="111"/>
    </location>
    <ligand>
        <name>NADPH</name>
        <dbReference type="ChEBI" id="CHEBI:57783"/>
    </ligand>
</feature>
<feature type="binding site" evidence="1">
    <location>
        <position position="111"/>
    </location>
    <ligand>
        <name>sn-glycerol 3-phosphate</name>
        <dbReference type="ChEBI" id="CHEBI:57597"/>
    </ligand>
</feature>
<feature type="binding site" evidence="1">
    <location>
        <position position="140"/>
    </location>
    <ligand>
        <name>sn-glycerol 3-phosphate</name>
        <dbReference type="ChEBI" id="CHEBI:57597"/>
    </ligand>
</feature>
<feature type="binding site" evidence="1">
    <location>
        <position position="142"/>
    </location>
    <ligand>
        <name>sn-glycerol 3-phosphate</name>
        <dbReference type="ChEBI" id="CHEBI:57597"/>
    </ligand>
</feature>
<feature type="binding site" evidence="1">
    <location>
        <position position="144"/>
    </location>
    <ligand>
        <name>NADPH</name>
        <dbReference type="ChEBI" id="CHEBI:57783"/>
    </ligand>
</feature>
<feature type="binding site" evidence="1">
    <location>
        <position position="195"/>
    </location>
    <ligand>
        <name>sn-glycerol 3-phosphate</name>
        <dbReference type="ChEBI" id="CHEBI:57597"/>
    </ligand>
</feature>
<feature type="binding site" evidence="1">
    <location>
        <position position="248"/>
    </location>
    <ligand>
        <name>sn-glycerol 3-phosphate</name>
        <dbReference type="ChEBI" id="CHEBI:57597"/>
    </ligand>
</feature>
<feature type="binding site" evidence="1">
    <location>
        <position position="258"/>
    </location>
    <ligand>
        <name>sn-glycerol 3-phosphate</name>
        <dbReference type="ChEBI" id="CHEBI:57597"/>
    </ligand>
</feature>
<feature type="binding site" evidence="1">
    <location>
        <position position="259"/>
    </location>
    <ligand>
        <name>NADPH</name>
        <dbReference type="ChEBI" id="CHEBI:57783"/>
    </ligand>
</feature>
<feature type="binding site" evidence="1">
    <location>
        <position position="259"/>
    </location>
    <ligand>
        <name>sn-glycerol 3-phosphate</name>
        <dbReference type="ChEBI" id="CHEBI:57597"/>
    </ligand>
</feature>
<feature type="binding site" evidence="1">
    <location>
        <position position="260"/>
    </location>
    <ligand>
        <name>sn-glycerol 3-phosphate</name>
        <dbReference type="ChEBI" id="CHEBI:57597"/>
    </ligand>
</feature>
<feature type="binding site" evidence="1">
    <location>
        <position position="283"/>
    </location>
    <ligand>
        <name>NADPH</name>
        <dbReference type="ChEBI" id="CHEBI:57783"/>
    </ligand>
</feature>
<feature type="binding site" evidence="1">
    <location>
        <position position="285"/>
    </location>
    <ligand>
        <name>NADPH</name>
        <dbReference type="ChEBI" id="CHEBI:57783"/>
    </ligand>
</feature>
<comment type="function">
    <text evidence="1">Catalyzes the reduction of the glycolytic intermediate dihydroxyacetone phosphate (DHAP) to sn-glycerol 3-phosphate (G3P), the key precursor for phospholipid synthesis.</text>
</comment>
<comment type="catalytic activity">
    <reaction evidence="1">
        <text>sn-glycerol 3-phosphate + NAD(+) = dihydroxyacetone phosphate + NADH + H(+)</text>
        <dbReference type="Rhea" id="RHEA:11092"/>
        <dbReference type="ChEBI" id="CHEBI:15378"/>
        <dbReference type="ChEBI" id="CHEBI:57540"/>
        <dbReference type="ChEBI" id="CHEBI:57597"/>
        <dbReference type="ChEBI" id="CHEBI:57642"/>
        <dbReference type="ChEBI" id="CHEBI:57945"/>
        <dbReference type="EC" id="1.1.1.94"/>
    </reaction>
    <physiologicalReaction direction="right-to-left" evidence="1">
        <dbReference type="Rhea" id="RHEA:11094"/>
    </physiologicalReaction>
</comment>
<comment type="catalytic activity">
    <reaction evidence="1">
        <text>sn-glycerol 3-phosphate + NADP(+) = dihydroxyacetone phosphate + NADPH + H(+)</text>
        <dbReference type="Rhea" id="RHEA:11096"/>
        <dbReference type="ChEBI" id="CHEBI:15378"/>
        <dbReference type="ChEBI" id="CHEBI:57597"/>
        <dbReference type="ChEBI" id="CHEBI:57642"/>
        <dbReference type="ChEBI" id="CHEBI:57783"/>
        <dbReference type="ChEBI" id="CHEBI:58349"/>
        <dbReference type="EC" id="1.1.1.94"/>
    </reaction>
    <physiologicalReaction direction="right-to-left" evidence="1">
        <dbReference type="Rhea" id="RHEA:11098"/>
    </physiologicalReaction>
</comment>
<comment type="pathway">
    <text evidence="1">Membrane lipid metabolism; glycerophospholipid metabolism.</text>
</comment>
<comment type="subcellular location">
    <subcellularLocation>
        <location evidence="1">Cytoplasm</location>
    </subcellularLocation>
</comment>
<comment type="similarity">
    <text evidence="1">Belongs to the NAD-dependent glycerol-3-phosphate dehydrogenase family.</text>
</comment>
<accession>A1UZX5</accession>
<dbReference type="EC" id="1.1.1.94" evidence="1"/>
<dbReference type="EMBL" id="CP000526">
    <property type="protein sequence ID" value="ABM50656.1"/>
    <property type="molecule type" value="Genomic_DNA"/>
</dbReference>
<dbReference type="SMR" id="A1UZX5"/>
<dbReference type="KEGG" id="bmv:BMASAVP1_A0177"/>
<dbReference type="HOGENOM" id="CLU_033449_0_2_4"/>
<dbReference type="UniPathway" id="UPA00940"/>
<dbReference type="GO" id="GO:0005829">
    <property type="term" value="C:cytosol"/>
    <property type="evidence" value="ECO:0007669"/>
    <property type="project" value="TreeGrafter"/>
</dbReference>
<dbReference type="GO" id="GO:0047952">
    <property type="term" value="F:glycerol-3-phosphate dehydrogenase [NAD(P)+] activity"/>
    <property type="evidence" value="ECO:0007669"/>
    <property type="project" value="UniProtKB-UniRule"/>
</dbReference>
<dbReference type="GO" id="GO:0051287">
    <property type="term" value="F:NAD binding"/>
    <property type="evidence" value="ECO:0007669"/>
    <property type="project" value="InterPro"/>
</dbReference>
<dbReference type="GO" id="GO:0005975">
    <property type="term" value="P:carbohydrate metabolic process"/>
    <property type="evidence" value="ECO:0007669"/>
    <property type="project" value="InterPro"/>
</dbReference>
<dbReference type="GO" id="GO:0046167">
    <property type="term" value="P:glycerol-3-phosphate biosynthetic process"/>
    <property type="evidence" value="ECO:0007669"/>
    <property type="project" value="UniProtKB-UniRule"/>
</dbReference>
<dbReference type="GO" id="GO:0046168">
    <property type="term" value="P:glycerol-3-phosphate catabolic process"/>
    <property type="evidence" value="ECO:0007669"/>
    <property type="project" value="InterPro"/>
</dbReference>
<dbReference type="GO" id="GO:0006650">
    <property type="term" value="P:glycerophospholipid metabolic process"/>
    <property type="evidence" value="ECO:0007669"/>
    <property type="project" value="UniProtKB-UniRule"/>
</dbReference>
<dbReference type="GO" id="GO:0008654">
    <property type="term" value="P:phospholipid biosynthetic process"/>
    <property type="evidence" value="ECO:0007669"/>
    <property type="project" value="UniProtKB-KW"/>
</dbReference>
<dbReference type="FunFam" id="1.10.1040.10:FF:000001">
    <property type="entry name" value="Glycerol-3-phosphate dehydrogenase [NAD(P)+]"/>
    <property type="match status" value="1"/>
</dbReference>
<dbReference type="FunFam" id="3.40.50.720:FF:000019">
    <property type="entry name" value="Glycerol-3-phosphate dehydrogenase [NAD(P)+]"/>
    <property type="match status" value="1"/>
</dbReference>
<dbReference type="Gene3D" id="1.10.1040.10">
    <property type="entry name" value="N-(1-d-carboxylethyl)-l-norvaline Dehydrogenase, domain 2"/>
    <property type="match status" value="1"/>
</dbReference>
<dbReference type="Gene3D" id="3.40.50.720">
    <property type="entry name" value="NAD(P)-binding Rossmann-like Domain"/>
    <property type="match status" value="1"/>
</dbReference>
<dbReference type="HAMAP" id="MF_00394">
    <property type="entry name" value="NAD_Glyc3P_dehydrog"/>
    <property type="match status" value="1"/>
</dbReference>
<dbReference type="InterPro" id="IPR008927">
    <property type="entry name" value="6-PGluconate_DH-like_C_sf"/>
</dbReference>
<dbReference type="InterPro" id="IPR013328">
    <property type="entry name" value="6PGD_dom2"/>
</dbReference>
<dbReference type="InterPro" id="IPR006168">
    <property type="entry name" value="G3P_DH_NAD-dep"/>
</dbReference>
<dbReference type="InterPro" id="IPR006109">
    <property type="entry name" value="G3P_DH_NAD-dep_C"/>
</dbReference>
<dbReference type="InterPro" id="IPR011128">
    <property type="entry name" value="G3P_DH_NAD-dep_N"/>
</dbReference>
<dbReference type="InterPro" id="IPR036291">
    <property type="entry name" value="NAD(P)-bd_dom_sf"/>
</dbReference>
<dbReference type="NCBIfam" id="NF000940">
    <property type="entry name" value="PRK00094.1-2"/>
    <property type="match status" value="1"/>
</dbReference>
<dbReference type="NCBIfam" id="NF000942">
    <property type="entry name" value="PRK00094.1-4"/>
    <property type="match status" value="1"/>
</dbReference>
<dbReference type="PANTHER" id="PTHR11728">
    <property type="entry name" value="GLYCEROL-3-PHOSPHATE DEHYDROGENASE"/>
    <property type="match status" value="1"/>
</dbReference>
<dbReference type="PANTHER" id="PTHR11728:SF1">
    <property type="entry name" value="GLYCEROL-3-PHOSPHATE DEHYDROGENASE [NAD(+)] 2, CHLOROPLASTIC"/>
    <property type="match status" value="1"/>
</dbReference>
<dbReference type="Pfam" id="PF07479">
    <property type="entry name" value="NAD_Gly3P_dh_C"/>
    <property type="match status" value="1"/>
</dbReference>
<dbReference type="Pfam" id="PF01210">
    <property type="entry name" value="NAD_Gly3P_dh_N"/>
    <property type="match status" value="1"/>
</dbReference>
<dbReference type="PIRSF" id="PIRSF000114">
    <property type="entry name" value="Glycerol-3-P_dh"/>
    <property type="match status" value="1"/>
</dbReference>
<dbReference type="PRINTS" id="PR00077">
    <property type="entry name" value="GPDHDRGNASE"/>
</dbReference>
<dbReference type="SUPFAM" id="SSF48179">
    <property type="entry name" value="6-phosphogluconate dehydrogenase C-terminal domain-like"/>
    <property type="match status" value="1"/>
</dbReference>
<dbReference type="SUPFAM" id="SSF51735">
    <property type="entry name" value="NAD(P)-binding Rossmann-fold domains"/>
    <property type="match status" value="1"/>
</dbReference>
<dbReference type="PROSITE" id="PS00957">
    <property type="entry name" value="NAD_G3PDH"/>
    <property type="match status" value="1"/>
</dbReference>
<gene>
    <name evidence="1" type="primary">gpsA</name>
    <name type="ordered locus">BMASAVP1_A0177</name>
</gene>
<name>GPDA_BURMS</name>
<protein>
    <recommendedName>
        <fullName evidence="1">Glycerol-3-phosphate dehydrogenase [NAD(P)+]</fullName>
        <ecNumber evidence="1">1.1.1.94</ecNumber>
    </recommendedName>
    <alternativeName>
        <fullName evidence="1">NAD(P)(+)-dependent glycerol-3-phosphate dehydrogenase</fullName>
    </alternativeName>
    <alternativeName>
        <fullName evidence="1">NAD(P)H-dependent dihydroxyacetone-phosphate reductase</fullName>
    </alternativeName>
</protein>
<sequence length="335" mass="34695">MLSMKVAVLGAGAWGTALAAHLAVRHDTLLWARDAALVAELAARRENARYLGGVALPPGLRYEADLATALSHAQADDALCVIAAPVAGLRALCRAMRDARRVPAHFVWVCKGFEADTRRLPHQMVAEELPDHASYGVLSGPSFAREVAQGLPVALTVASASAACRERTLAAFHHGAMRIYTGDDVVGVEVGGAVKNVLAIATGIADGLGLGLNARAALVTRGLAEMSRLGVALGGRAETFTGLTGLGDLILTATGDLSRNRSVGLQLAAGRSLDDILAALGHVAEGVRCARAVLSIARERGVDMPITEAVCAVLFDGVAPRDAVSGLLRRDAKAE</sequence>
<proteinExistence type="inferred from homology"/>
<evidence type="ECO:0000255" key="1">
    <source>
        <dbReference type="HAMAP-Rule" id="MF_00394"/>
    </source>
</evidence>
<reference key="1">
    <citation type="journal article" date="2010" name="Genome Biol. Evol.">
        <title>Continuing evolution of Burkholderia mallei through genome reduction and large-scale rearrangements.</title>
        <authorList>
            <person name="Losada L."/>
            <person name="Ronning C.M."/>
            <person name="DeShazer D."/>
            <person name="Woods D."/>
            <person name="Fedorova N."/>
            <person name="Kim H.S."/>
            <person name="Shabalina S.A."/>
            <person name="Pearson T.R."/>
            <person name="Brinkac L."/>
            <person name="Tan P."/>
            <person name="Nandi T."/>
            <person name="Crabtree J."/>
            <person name="Badger J."/>
            <person name="Beckstrom-Sternberg S."/>
            <person name="Saqib M."/>
            <person name="Schutzer S.E."/>
            <person name="Keim P."/>
            <person name="Nierman W.C."/>
        </authorList>
    </citation>
    <scope>NUCLEOTIDE SEQUENCE [LARGE SCALE GENOMIC DNA]</scope>
    <source>
        <strain>SAVP1</strain>
    </source>
</reference>